<protein>
    <recommendedName>
        <fullName evidence="1">3-octaprenyl-4-hydroxybenzoate carboxy-lyase</fullName>
        <ecNumber evidence="1">4.1.1.98</ecNumber>
    </recommendedName>
    <alternativeName>
        <fullName evidence="1">Polyprenyl p-hydroxybenzoate decarboxylase</fullName>
    </alternativeName>
</protein>
<evidence type="ECO:0000255" key="1">
    <source>
        <dbReference type="HAMAP-Rule" id="MF_01636"/>
    </source>
</evidence>
<accession>Q21EG7</accession>
<sequence>MAFKDLRDFIALLEEKGQLKRISHPVDPYLEITEISDRTLRAGGPALLFENVVGHTTPVLANLFGTPDRVAMGMGQENVGALREVGELLAFLKEPEPPKGMKDAWEKLPIFKQVLNMAPKLIKNAPCQEFEVSGEDVDLTAIPIQTCWPGDAAPLVTWPLVVTKGPHKDRQNLGIYRMQLIGKNKLIMRWLSHRGGALDFREWQQQHPGENFPVSVALGADPATILGAVTPVPDTLSEYAFAGLLRGSKTEVTKSRGNDLQVPASAEYILEGHIAPGEMADEGPFGDHTGYYNEVDSFPVFTVERITHRKDPIYHSTYTGRPPDEPAVLGVALNEVFVPILKKQFPEIVDFYLPPEGCSYRMAVVTMKKQYPGHAKRVMLGVWSFLRQFMYTKFVIVTDDDVNARDWNDVIWALTTRVDPMRDTTMIDNTPIDYLDFASPVSGLGSKMGIDATNKWPGETNREWGTTIEMTAEVKNKVDAIWDKLGIDDK</sequence>
<organism>
    <name type="scientific">Saccharophagus degradans (strain 2-40 / ATCC 43961 / DSM 17024)</name>
    <dbReference type="NCBI Taxonomy" id="203122"/>
    <lineage>
        <taxon>Bacteria</taxon>
        <taxon>Pseudomonadati</taxon>
        <taxon>Pseudomonadota</taxon>
        <taxon>Gammaproteobacteria</taxon>
        <taxon>Cellvibrionales</taxon>
        <taxon>Cellvibrionaceae</taxon>
        <taxon>Saccharophagus</taxon>
    </lineage>
</organism>
<dbReference type="EC" id="4.1.1.98" evidence="1"/>
<dbReference type="EMBL" id="CP000282">
    <property type="protein sequence ID" value="ABD82912.1"/>
    <property type="molecule type" value="Genomic_DNA"/>
</dbReference>
<dbReference type="RefSeq" id="WP_011470127.1">
    <property type="nucleotide sequence ID" value="NC_007912.1"/>
</dbReference>
<dbReference type="SMR" id="Q21EG7"/>
<dbReference type="STRING" id="203122.Sde_3657"/>
<dbReference type="GeneID" id="98615266"/>
<dbReference type="KEGG" id="sde:Sde_3657"/>
<dbReference type="eggNOG" id="COG0043">
    <property type="taxonomic scope" value="Bacteria"/>
</dbReference>
<dbReference type="HOGENOM" id="CLU_023348_4_1_6"/>
<dbReference type="OrthoDB" id="9809841at2"/>
<dbReference type="UniPathway" id="UPA00232"/>
<dbReference type="Proteomes" id="UP000001947">
    <property type="component" value="Chromosome"/>
</dbReference>
<dbReference type="GO" id="GO:0005829">
    <property type="term" value="C:cytosol"/>
    <property type="evidence" value="ECO:0007669"/>
    <property type="project" value="TreeGrafter"/>
</dbReference>
<dbReference type="GO" id="GO:0005886">
    <property type="term" value="C:plasma membrane"/>
    <property type="evidence" value="ECO:0007669"/>
    <property type="project" value="UniProtKB-SubCell"/>
</dbReference>
<dbReference type="GO" id="GO:0008694">
    <property type="term" value="F:3-octaprenyl-4-hydroxybenzoate carboxy-lyase activity"/>
    <property type="evidence" value="ECO:0007669"/>
    <property type="project" value="UniProtKB-UniRule"/>
</dbReference>
<dbReference type="GO" id="GO:0046872">
    <property type="term" value="F:metal ion binding"/>
    <property type="evidence" value="ECO:0007669"/>
    <property type="project" value="UniProtKB-KW"/>
</dbReference>
<dbReference type="GO" id="GO:0006744">
    <property type="term" value="P:ubiquinone biosynthetic process"/>
    <property type="evidence" value="ECO:0007669"/>
    <property type="project" value="UniProtKB-UniRule"/>
</dbReference>
<dbReference type="FunFam" id="3.40.1670.10:FF:000001">
    <property type="entry name" value="3-octaprenyl-4-hydroxybenzoate carboxy-lyase"/>
    <property type="match status" value="1"/>
</dbReference>
<dbReference type="Gene3D" id="1.20.5.570">
    <property type="entry name" value="Single helix bin"/>
    <property type="match status" value="1"/>
</dbReference>
<dbReference type="Gene3D" id="3.40.1670.10">
    <property type="entry name" value="UbiD C-terminal domain-like"/>
    <property type="match status" value="1"/>
</dbReference>
<dbReference type="HAMAP" id="MF_01636">
    <property type="entry name" value="UbiD"/>
    <property type="match status" value="1"/>
</dbReference>
<dbReference type="InterPro" id="IPR002830">
    <property type="entry name" value="UbiD"/>
</dbReference>
<dbReference type="InterPro" id="IPR049381">
    <property type="entry name" value="UbiD-like_C"/>
</dbReference>
<dbReference type="InterPro" id="IPR049383">
    <property type="entry name" value="UbiD-like_N"/>
</dbReference>
<dbReference type="InterPro" id="IPR023677">
    <property type="entry name" value="UbiD_bacteria"/>
</dbReference>
<dbReference type="InterPro" id="IPR048304">
    <property type="entry name" value="UbiD_Rift_dom"/>
</dbReference>
<dbReference type="NCBIfam" id="NF008175">
    <property type="entry name" value="PRK10922.1"/>
    <property type="match status" value="1"/>
</dbReference>
<dbReference type="NCBIfam" id="TIGR00148">
    <property type="entry name" value="UbiD family decarboxylase"/>
    <property type="match status" value="1"/>
</dbReference>
<dbReference type="PANTHER" id="PTHR30108">
    <property type="entry name" value="3-OCTAPRENYL-4-HYDROXYBENZOATE CARBOXY-LYASE-RELATED"/>
    <property type="match status" value="1"/>
</dbReference>
<dbReference type="PANTHER" id="PTHR30108:SF17">
    <property type="entry name" value="FERULIC ACID DECARBOXYLASE 1"/>
    <property type="match status" value="1"/>
</dbReference>
<dbReference type="Pfam" id="PF01977">
    <property type="entry name" value="UbiD"/>
    <property type="match status" value="1"/>
</dbReference>
<dbReference type="Pfam" id="PF20696">
    <property type="entry name" value="UbiD_C"/>
    <property type="match status" value="1"/>
</dbReference>
<dbReference type="Pfam" id="PF20695">
    <property type="entry name" value="UbiD_N"/>
    <property type="match status" value="1"/>
</dbReference>
<dbReference type="SUPFAM" id="SSF50475">
    <property type="entry name" value="FMN-binding split barrel"/>
    <property type="match status" value="1"/>
</dbReference>
<dbReference type="SUPFAM" id="SSF143968">
    <property type="entry name" value="UbiD C-terminal domain-like"/>
    <property type="match status" value="1"/>
</dbReference>
<proteinExistence type="inferred from homology"/>
<reference key="1">
    <citation type="journal article" date="2008" name="PLoS Genet.">
        <title>Complete genome sequence of the complex carbohydrate-degrading marine bacterium, Saccharophagus degradans strain 2-40 T.</title>
        <authorList>
            <person name="Weiner R.M."/>
            <person name="Taylor L.E. II"/>
            <person name="Henrissat B."/>
            <person name="Hauser L."/>
            <person name="Land M."/>
            <person name="Coutinho P.M."/>
            <person name="Rancurel C."/>
            <person name="Saunders E.H."/>
            <person name="Longmire A.G."/>
            <person name="Zhang H."/>
            <person name="Bayer E.A."/>
            <person name="Gilbert H.J."/>
            <person name="Larimer F."/>
            <person name="Zhulin I.B."/>
            <person name="Ekborg N.A."/>
            <person name="Lamed R."/>
            <person name="Richardson P.M."/>
            <person name="Borovok I."/>
            <person name="Hutcheson S."/>
        </authorList>
    </citation>
    <scope>NUCLEOTIDE SEQUENCE [LARGE SCALE GENOMIC DNA]</scope>
    <source>
        <strain>2-40 / ATCC 43961 / DSM 17024</strain>
    </source>
</reference>
<comment type="function">
    <text evidence="1">Catalyzes the decarboxylation of 3-octaprenyl-4-hydroxy benzoate to 2-octaprenylphenol, an intermediate step in ubiquinone biosynthesis.</text>
</comment>
<comment type="catalytic activity">
    <reaction evidence="1">
        <text>a 4-hydroxy-3-(all-trans-polyprenyl)benzoate + H(+) = a 2-(all-trans-polyprenyl)phenol + CO2</text>
        <dbReference type="Rhea" id="RHEA:41680"/>
        <dbReference type="Rhea" id="RHEA-COMP:9514"/>
        <dbReference type="Rhea" id="RHEA-COMP:9516"/>
        <dbReference type="ChEBI" id="CHEBI:1269"/>
        <dbReference type="ChEBI" id="CHEBI:15378"/>
        <dbReference type="ChEBI" id="CHEBI:16526"/>
        <dbReference type="ChEBI" id="CHEBI:78396"/>
        <dbReference type="EC" id="4.1.1.98"/>
    </reaction>
</comment>
<comment type="cofactor">
    <cofactor evidence="1">
        <name>prenylated FMN</name>
        <dbReference type="ChEBI" id="CHEBI:87746"/>
    </cofactor>
    <text evidence="1">Binds 1 prenylated FMN per subunit.</text>
</comment>
<comment type="cofactor">
    <cofactor evidence="1">
        <name>Mn(2+)</name>
        <dbReference type="ChEBI" id="CHEBI:29035"/>
    </cofactor>
</comment>
<comment type="pathway">
    <text evidence="1">Cofactor biosynthesis; ubiquinone biosynthesis.</text>
</comment>
<comment type="subunit">
    <text evidence="1">Homohexamer.</text>
</comment>
<comment type="subcellular location">
    <subcellularLocation>
        <location evidence="1">Cell membrane</location>
        <topology evidence="1">Peripheral membrane protein</topology>
    </subcellularLocation>
</comment>
<comment type="similarity">
    <text evidence="1">Belongs to the UbiD family.</text>
</comment>
<name>UBID_SACD2</name>
<feature type="chain" id="PRO_0000267690" description="3-octaprenyl-4-hydroxybenzoate carboxy-lyase">
    <location>
        <begin position="1"/>
        <end position="490"/>
    </location>
</feature>
<feature type="active site" description="Proton donor" evidence="1">
    <location>
        <position position="287"/>
    </location>
</feature>
<feature type="binding site" evidence="1">
    <location>
        <position position="172"/>
    </location>
    <ligand>
        <name>Mn(2+)</name>
        <dbReference type="ChEBI" id="CHEBI:29035"/>
    </ligand>
</feature>
<feature type="binding site" evidence="1">
    <location>
        <begin position="175"/>
        <end position="177"/>
    </location>
    <ligand>
        <name>prenylated FMN</name>
        <dbReference type="ChEBI" id="CHEBI:87746"/>
    </ligand>
</feature>
<feature type="binding site" evidence="1">
    <location>
        <begin position="189"/>
        <end position="191"/>
    </location>
    <ligand>
        <name>prenylated FMN</name>
        <dbReference type="ChEBI" id="CHEBI:87746"/>
    </ligand>
</feature>
<feature type="binding site" evidence="1">
    <location>
        <begin position="194"/>
        <end position="195"/>
    </location>
    <ligand>
        <name>prenylated FMN</name>
        <dbReference type="ChEBI" id="CHEBI:87746"/>
    </ligand>
</feature>
<feature type="binding site" evidence="1">
    <location>
        <position position="238"/>
    </location>
    <ligand>
        <name>Mn(2+)</name>
        <dbReference type="ChEBI" id="CHEBI:29035"/>
    </ligand>
</feature>
<keyword id="KW-1003">Cell membrane</keyword>
<keyword id="KW-0210">Decarboxylase</keyword>
<keyword id="KW-0285">Flavoprotein</keyword>
<keyword id="KW-0288">FMN</keyword>
<keyword id="KW-0456">Lyase</keyword>
<keyword id="KW-0464">Manganese</keyword>
<keyword id="KW-0472">Membrane</keyword>
<keyword id="KW-0479">Metal-binding</keyword>
<keyword id="KW-1185">Reference proteome</keyword>
<keyword id="KW-0831">Ubiquinone biosynthesis</keyword>
<gene>
    <name evidence="1" type="primary">ubiD</name>
    <name type="ordered locus">Sde_3657</name>
</gene>